<accession>B6J7X5</accession>
<evidence type="ECO:0000255" key="1">
    <source>
        <dbReference type="HAMAP-Rule" id="MF_00380"/>
    </source>
</evidence>
<evidence type="ECO:0000256" key="2">
    <source>
        <dbReference type="SAM" id="MobiDB-lite"/>
    </source>
</evidence>
<organism>
    <name type="scientific">Coxiella burnetii (strain CbuK_Q154)</name>
    <name type="common">Coxiella burnetii (strain Q154)</name>
    <dbReference type="NCBI Taxonomy" id="434924"/>
    <lineage>
        <taxon>Bacteria</taxon>
        <taxon>Pseudomonadati</taxon>
        <taxon>Pseudomonadota</taxon>
        <taxon>Gammaproteobacteria</taxon>
        <taxon>Legionellales</taxon>
        <taxon>Coxiellaceae</taxon>
        <taxon>Coxiella</taxon>
    </lineage>
</organism>
<dbReference type="EMBL" id="CP001020">
    <property type="protein sequence ID" value="ACJ20374.1"/>
    <property type="molecule type" value="Genomic_DNA"/>
</dbReference>
<dbReference type="RefSeq" id="WP_005770927.1">
    <property type="nucleotide sequence ID" value="NC_011528.1"/>
</dbReference>
<dbReference type="SMR" id="B6J7X5"/>
<dbReference type="KEGG" id="cbc:CbuK_1184"/>
<dbReference type="HOGENOM" id="CLU_105066_1_3_6"/>
<dbReference type="GO" id="GO:0005829">
    <property type="term" value="C:cytosol"/>
    <property type="evidence" value="ECO:0007669"/>
    <property type="project" value="TreeGrafter"/>
</dbReference>
<dbReference type="GO" id="GO:0003677">
    <property type="term" value="F:DNA binding"/>
    <property type="evidence" value="ECO:0007669"/>
    <property type="project" value="UniProtKB-UniRule"/>
</dbReference>
<dbReference type="GO" id="GO:0030527">
    <property type="term" value="F:structural constituent of chromatin"/>
    <property type="evidence" value="ECO:0007669"/>
    <property type="project" value="InterPro"/>
</dbReference>
<dbReference type="GO" id="GO:0006310">
    <property type="term" value="P:DNA recombination"/>
    <property type="evidence" value="ECO:0007669"/>
    <property type="project" value="UniProtKB-UniRule"/>
</dbReference>
<dbReference type="GO" id="GO:0009893">
    <property type="term" value="P:positive regulation of metabolic process"/>
    <property type="evidence" value="ECO:0007669"/>
    <property type="project" value="UniProtKB-ARBA"/>
</dbReference>
<dbReference type="GO" id="GO:0006355">
    <property type="term" value="P:regulation of DNA-templated transcription"/>
    <property type="evidence" value="ECO:0007669"/>
    <property type="project" value="UniProtKB-UniRule"/>
</dbReference>
<dbReference type="GO" id="GO:0006417">
    <property type="term" value="P:regulation of translation"/>
    <property type="evidence" value="ECO:0007669"/>
    <property type="project" value="UniProtKB-UniRule"/>
</dbReference>
<dbReference type="CDD" id="cd13835">
    <property type="entry name" value="IHF_A"/>
    <property type="match status" value="1"/>
</dbReference>
<dbReference type="FunFam" id="4.10.520.10:FF:000002">
    <property type="entry name" value="Integration host factor subunit alpha"/>
    <property type="match status" value="1"/>
</dbReference>
<dbReference type="Gene3D" id="4.10.520.10">
    <property type="entry name" value="IHF-like DNA-binding proteins"/>
    <property type="match status" value="1"/>
</dbReference>
<dbReference type="HAMAP" id="MF_00380">
    <property type="entry name" value="IHF_alpha"/>
    <property type="match status" value="1"/>
</dbReference>
<dbReference type="InterPro" id="IPR000119">
    <property type="entry name" value="Hist_DNA-bd"/>
</dbReference>
<dbReference type="InterPro" id="IPR020816">
    <property type="entry name" value="Histone-like_DNA-bd_CS"/>
</dbReference>
<dbReference type="InterPro" id="IPR010992">
    <property type="entry name" value="IHF-like_DNA-bd_dom_sf"/>
</dbReference>
<dbReference type="InterPro" id="IPR005684">
    <property type="entry name" value="IHF_alpha"/>
</dbReference>
<dbReference type="NCBIfam" id="TIGR00987">
    <property type="entry name" value="himA"/>
    <property type="match status" value="1"/>
</dbReference>
<dbReference type="NCBIfam" id="NF001401">
    <property type="entry name" value="PRK00285.1"/>
    <property type="match status" value="1"/>
</dbReference>
<dbReference type="PANTHER" id="PTHR33175">
    <property type="entry name" value="DNA-BINDING PROTEIN HU"/>
    <property type="match status" value="1"/>
</dbReference>
<dbReference type="PANTHER" id="PTHR33175:SF2">
    <property type="entry name" value="INTEGRATION HOST FACTOR SUBUNIT ALPHA"/>
    <property type="match status" value="1"/>
</dbReference>
<dbReference type="Pfam" id="PF00216">
    <property type="entry name" value="Bac_DNA_binding"/>
    <property type="match status" value="1"/>
</dbReference>
<dbReference type="PRINTS" id="PR01727">
    <property type="entry name" value="DNABINDINGHU"/>
</dbReference>
<dbReference type="SMART" id="SM00411">
    <property type="entry name" value="BHL"/>
    <property type="match status" value="1"/>
</dbReference>
<dbReference type="SUPFAM" id="SSF47729">
    <property type="entry name" value="IHF-like DNA-binding proteins"/>
    <property type="match status" value="1"/>
</dbReference>
<dbReference type="PROSITE" id="PS00045">
    <property type="entry name" value="HISTONE_LIKE"/>
    <property type="match status" value="1"/>
</dbReference>
<protein>
    <recommendedName>
        <fullName evidence="1">Integration host factor subunit alpha</fullName>
        <shortName evidence="1">IHF-alpha</shortName>
    </recommendedName>
</protein>
<comment type="function">
    <text evidence="1">This protein is one of the two subunits of integration host factor, a specific DNA-binding protein that functions in genetic recombination as well as in transcriptional and translational control.</text>
</comment>
<comment type="subunit">
    <text evidence="1">Heterodimer of an alpha and a beta chain.</text>
</comment>
<comment type="similarity">
    <text evidence="1">Belongs to the bacterial histone-like protein family.</text>
</comment>
<feature type="chain" id="PRO_1000122131" description="Integration host factor subunit alpha">
    <location>
        <begin position="1"/>
        <end position="103"/>
    </location>
</feature>
<feature type="region of interest" description="Disordered" evidence="2">
    <location>
        <begin position="50"/>
        <end position="72"/>
    </location>
</feature>
<feature type="compositionally biased region" description="Basic and acidic residues" evidence="2">
    <location>
        <begin position="54"/>
        <end position="69"/>
    </location>
</feature>
<reference key="1">
    <citation type="journal article" date="2009" name="Infect. Immun.">
        <title>Comparative genomics reveal extensive transposon-mediated genomic plasticity and diversity among potential effector proteins within the genus Coxiella.</title>
        <authorList>
            <person name="Beare P.A."/>
            <person name="Unsworth N."/>
            <person name="Andoh M."/>
            <person name="Voth D.E."/>
            <person name="Omsland A."/>
            <person name="Gilk S.D."/>
            <person name="Williams K.P."/>
            <person name="Sobral B.W."/>
            <person name="Kupko J.J. III"/>
            <person name="Porcella S.F."/>
            <person name="Samuel J.E."/>
            <person name="Heinzen R.A."/>
        </authorList>
    </citation>
    <scope>NUCLEOTIDE SEQUENCE [LARGE SCALE GENOMIC DNA]</scope>
    <source>
        <strain>CbuK_Q154</strain>
    </source>
</reference>
<proteinExistence type="inferred from homology"/>
<sequence length="103" mass="11617">MALTKADLSEHLFNVVGLNKREAKDLVELFFKEISLSLERGEPVKLSGFGNFNLRDKGERPGRNPKTGEEIPITARRVVTFRAGHKLKSRVEKNVKPKEEGES</sequence>
<name>IHFA_COXB1</name>
<keyword id="KW-0233">DNA recombination</keyword>
<keyword id="KW-0238">DNA-binding</keyword>
<keyword id="KW-0804">Transcription</keyword>
<keyword id="KW-0805">Transcription regulation</keyword>
<keyword id="KW-0810">Translation regulation</keyword>
<gene>
    <name evidence="1" type="primary">ihfA</name>
    <name evidence="1" type="synonym">himA</name>
    <name type="ordered locus">CbuK_1184</name>
</gene>